<proteinExistence type="inferred from homology"/>
<dbReference type="EC" id="2.1.1.17" evidence="1"/>
<dbReference type="EMBL" id="DS547097">
    <property type="protein sequence ID" value="EDR10550.1"/>
    <property type="molecule type" value="Genomic_DNA"/>
</dbReference>
<dbReference type="RefSeq" id="XP_001879000.1">
    <property type="nucleotide sequence ID" value="XM_001878965.1"/>
</dbReference>
<dbReference type="SMR" id="B0D4E6"/>
<dbReference type="FunCoup" id="B0D4E6">
    <property type="interactions" value="49"/>
</dbReference>
<dbReference type="STRING" id="486041.B0D4E6"/>
<dbReference type="GeneID" id="6074628"/>
<dbReference type="KEGG" id="lbc:LACBIDRAFT_247989"/>
<dbReference type="HOGENOM" id="CLU_005987_0_1_1"/>
<dbReference type="InParanoid" id="B0D4E6"/>
<dbReference type="OrthoDB" id="4583at2759"/>
<dbReference type="UniPathway" id="UPA00753"/>
<dbReference type="Proteomes" id="UP000001194">
    <property type="component" value="Unassembled WGS sequence"/>
</dbReference>
<dbReference type="GO" id="GO:0005789">
    <property type="term" value="C:endoplasmic reticulum membrane"/>
    <property type="evidence" value="ECO:0007669"/>
    <property type="project" value="UniProtKB-SubCell"/>
</dbReference>
<dbReference type="GO" id="GO:0004608">
    <property type="term" value="F:phosphatidylethanolamine N-methyltransferase activity"/>
    <property type="evidence" value="ECO:0007669"/>
    <property type="project" value="UniProtKB-UniRule"/>
</dbReference>
<dbReference type="GO" id="GO:0032259">
    <property type="term" value="P:methylation"/>
    <property type="evidence" value="ECO:0007669"/>
    <property type="project" value="UniProtKB-KW"/>
</dbReference>
<dbReference type="GO" id="GO:0006656">
    <property type="term" value="P:phosphatidylcholine biosynthetic process"/>
    <property type="evidence" value="ECO:0007669"/>
    <property type="project" value="UniProtKB-UniRule"/>
</dbReference>
<dbReference type="Gene3D" id="2.60.40.2840">
    <property type="match status" value="1"/>
</dbReference>
<dbReference type="HAMAP" id="MF_03217">
    <property type="entry name" value="PEMT"/>
    <property type="match status" value="1"/>
</dbReference>
<dbReference type="InterPro" id="IPR007318">
    <property type="entry name" value="Phopholipid_MeTrfase"/>
</dbReference>
<dbReference type="InterPro" id="IPR016219">
    <property type="entry name" value="Phosphatid-EA_MeTrfase_fun"/>
</dbReference>
<dbReference type="PANTHER" id="PTHR32138">
    <property type="entry name" value="PHOSPHATIDYLETHANOLAMINE N-METHYLTRANSFERASE"/>
    <property type="match status" value="1"/>
</dbReference>
<dbReference type="PANTHER" id="PTHR32138:SF0">
    <property type="entry name" value="PHOSPHATIDYLETHANOLAMINE N-METHYLTRANSFERASE"/>
    <property type="match status" value="1"/>
</dbReference>
<dbReference type="Pfam" id="PF04191">
    <property type="entry name" value="PEMT"/>
    <property type="match status" value="2"/>
</dbReference>
<dbReference type="PIRSF" id="PIRSF000383">
    <property type="entry name" value="PEAMT"/>
    <property type="match status" value="1"/>
</dbReference>
<dbReference type="PROSITE" id="PS51598">
    <property type="entry name" value="SAM_CHO2"/>
    <property type="match status" value="1"/>
</dbReference>
<feature type="chain" id="PRO_0000405892" description="Phosphatidylethanolamine N-methyltransferase">
    <location>
        <begin position="1"/>
        <end position="909"/>
    </location>
</feature>
<feature type="topological domain" description="Lumenal" evidence="1">
    <location>
        <begin position="1"/>
        <end position="65"/>
    </location>
</feature>
<feature type="transmembrane region" description="Helical" evidence="1">
    <location>
        <begin position="66"/>
        <end position="86"/>
    </location>
</feature>
<feature type="topological domain" description="Cytoplasmic" evidence="1">
    <location>
        <begin position="87"/>
        <end position="91"/>
    </location>
</feature>
<feature type="transmembrane region" description="Helical" evidence="1">
    <location>
        <begin position="92"/>
        <end position="112"/>
    </location>
</feature>
<feature type="topological domain" description="Lumenal" evidence="1">
    <location>
        <begin position="113"/>
        <end position="173"/>
    </location>
</feature>
<feature type="transmembrane region" description="Helical" evidence="1">
    <location>
        <begin position="174"/>
        <end position="194"/>
    </location>
</feature>
<feature type="topological domain" description="Cytoplasmic" evidence="1">
    <location>
        <begin position="195"/>
        <end position="199"/>
    </location>
</feature>
<feature type="transmembrane region" description="Helical" evidence="1">
    <location>
        <begin position="200"/>
        <end position="220"/>
    </location>
</feature>
<feature type="topological domain" description="Lumenal" evidence="1">
    <location>
        <begin position="221"/>
        <end position="256"/>
    </location>
</feature>
<feature type="transmembrane region" description="Helical" evidence="1">
    <location>
        <begin position="257"/>
        <end position="277"/>
    </location>
</feature>
<feature type="topological domain" description="Cytoplasmic" evidence="1">
    <location>
        <begin position="278"/>
        <end position="279"/>
    </location>
</feature>
<feature type="transmembrane region" description="Helical" evidence="1">
    <location>
        <begin position="280"/>
        <end position="300"/>
    </location>
</feature>
<feature type="topological domain" description="Lumenal" evidence="1">
    <location>
        <begin position="301"/>
        <end position="373"/>
    </location>
</feature>
<feature type="transmembrane region" description="Helical" evidence="1">
    <location>
        <begin position="374"/>
        <end position="394"/>
    </location>
</feature>
<feature type="topological domain" description="Cytoplasmic" evidence="1">
    <location>
        <begin position="395"/>
        <end position="399"/>
    </location>
</feature>
<feature type="transmembrane region" description="Helical" evidence="1">
    <location>
        <begin position="400"/>
        <end position="420"/>
    </location>
</feature>
<feature type="topological domain" description="Lumenal" evidence="1">
    <location>
        <begin position="421"/>
        <end position="455"/>
    </location>
</feature>
<feature type="transmembrane region" description="Helical" evidence="1">
    <location>
        <begin position="456"/>
        <end position="476"/>
    </location>
</feature>
<feature type="topological domain" description="Cytoplasmic" evidence="1">
    <location>
        <begin position="477"/>
        <end position="497"/>
    </location>
</feature>
<feature type="transmembrane region" description="Helical" evidence="1">
    <location>
        <begin position="498"/>
        <end position="518"/>
    </location>
</feature>
<feature type="topological domain" description="Lumenal" evidence="1">
    <location>
        <begin position="519"/>
        <end position="551"/>
    </location>
</feature>
<feature type="transmembrane region" description="Helical" evidence="1">
    <location>
        <begin position="552"/>
        <end position="572"/>
    </location>
</feature>
<feature type="topological domain" description="Cytoplasmic" evidence="1">
    <location>
        <begin position="573"/>
        <end position="909"/>
    </location>
</feature>
<feature type="region of interest" description="Disordered" evidence="2">
    <location>
        <begin position="1"/>
        <end position="33"/>
    </location>
</feature>
<sequence length="909" mass="103544">MTSSQSFLRQRKPQANDETESELHNTPEPTKQDVVWGKTPGGEVFRVPTTHDVITTLFNPRYKKSHLDLLNLTLLGFQLVLFFILPRRASQIFFLFYFAFWRGAYDAGLGWVLTKQSKKKWIVREVQRLGWLDEKRRPAVRNWIRKQLADKMGKDYSFDDLPLEYNTWLLFRQAVDVILVNDFLSYCMFAFSCFRVPEGLSVLALLILRRWLGGFLLIAFNLWVKTEAHNVVKDYGWYWGDVFFQRGNLVFDGVFELAPHPMYSVGYAGYYGLSLIAGSYAVLFVSLAAHAAQFAFLVFFENPPVAASYKKISRHVSQPSNASSNGDIEMDPNTRSLISSPRKSATSQHDLLNKYFRRDVVVLRNLDLLRSTDAMLVLIIAYALMISFLPTLSARTMLALHFLHALAWCMIHYVGLGLILQAQSKTKFLVRHFMKNYHYSQNDGGGGAIVEAFTNWKAIYNLSMCMTYVSCVGVVWKSYSLPHDWTVGNELLRHTLGALLVGLHVWASMESFEVLGVFGWFFGDFFMEEFPTHLEYTGIYRYLNNPEAMGGAAWFGLALISGSKLVLSLAVIRHLANWWFLSSVENPHMRKLYGDSLRKDAGFVKVIKNHAPELKRVAREVKGTFDKVFEETADAVEDFLAKCERSSGPRISEVVQETKVLLQQSRERLVITRVSNDISAYDSSKYHVSISPSSLTGERTFHLGEPITIKWQAPHKHSRKDWIGLYRVGANKSNTVTKTSSMGMWLPVHGEEWDGDVPLGLKRVPSKHLESENGVVTFKGNTLPWLVGHYEVRYHHDGKYNVMSMDGPLEIFVDKPSDMTFSSVRNSLMRIVPLCLDSDPSLIPFSCKDRDPDDFSFWSEHQAKRICAAIKQVFNVDYAPEVVVADANLTALANRILISKEILSTRSDT</sequence>
<reference key="1">
    <citation type="journal article" date="2008" name="Nature">
        <title>The genome of Laccaria bicolor provides insights into mycorrhizal symbiosis.</title>
        <authorList>
            <person name="Martin F."/>
            <person name="Aerts A."/>
            <person name="Ahren D."/>
            <person name="Brun A."/>
            <person name="Danchin E.G.J."/>
            <person name="Duchaussoy F."/>
            <person name="Gibon J."/>
            <person name="Kohler A."/>
            <person name="Lindquist E."/>
            <person name="Pereda V."/>
            <person name="Salamov A."/>
            <person name="Shapiro H.J."/>
            <person name="Wuyts J."/>
            <person name="Blaudez D."/>
            <person name="Buee M."/>
            <person name="Brokstein P."/>
            <person name="Canbaeck B."/>
            <person name="Cohen D."/>
            <person name="Courty P.E."/>
            <person name="Coutinho P.M."/>
            <person name="Delaruelle C."/>
            <person name="Detter J.C."/>
            <person name="Deveau A."/>
            <person name="DiFazio S."/>
            <person name="Duplessis S."/>
            <person name="Fraissinet-Tachet L."/>
            <person name="Lucic E."/>
            <person name="Frey-Klett P."/>
            <person name="Fourrey C."/>
            <person name="Feussner I."/>
            <person name="Gay G."/>
            <person name="Grimwood J."/>
            <person name="Hoegger P.J."/>
            <person name="Jain P."/>
            <person name="Kilaru S."/>
            <person name="Labbe J."/>
            <person name="Lin Y.C."/>
            <person name="Legue V."/>
            <person name="Le Tacon F."/>
            <person name="Marmeisse R."/>
            <person name="Melayah D."/>
            <person name="Montanini B."/>
            <person name="Muratet M."/>
            <person name="Nehls U."/>
            <person name="Niculita-Hirzel H."/>
            <person name="Oudot-Le Secq M.P."/>
            <person name="Peter M."/>
            <person name="Quesneville H."/>
            <person name="Rajashekar B."/>
            <person name="Reich M."/>
            <person name="Rouhier N."/>
            <person name="Schmutz J."/>
            <person name="Yin T."/>
            <person name="Chalot M."/>
            <person name="Henrissat B."/>
            <person name="Kuees U."/>
            <person name="Lucas S."/>
            <person name="Van de Peer Y."/>
            <person name="Podila G.K."/>
            <person name="Polle A."/>
            <person name="Pukkila P.J."/>
            <person name="Richardson P.M."/>
            <person name="Rouze P."/>
            <person name="Sanders I.R."/>
            <person name="Stajich J.E."/>
            <person name="Tunlid A."/>
            <person name="Tuskan G."/>
            <person name="Grigoriev I.V."/>
        </authorList>
    </citation>
    <scope>NUCLEOTIDE SEQUENCE [LARGE SCALE GENOMIC DNA]</scope>
    <source>
        <strain>S238N-H82 / ATCC MYA-4686</strain>
    </source>
</reference>
<evidence type="ECO:0000255" key="1">
    <source>
        <dbReference type="HAMAP-Rule" id="MF_03217"/>
    </source>
</evidence>
<evidence type="ECO:0000256" key="2">
    <source>
        <dbReference type="SAM" id="MobiDB-lite"/>
    </source>
</evidence>
<gene>
    <name type="primary">CHO2</name>
    <name type="ORF">LACBIDRAFT_247989</name>
</gene>
<accession>B0D4E6</accession>
<keyword id="KW-0256">Endoplasmic reticulum</keyword>
<keyword id="KW-0444">Lipid biosynthesis</keyword>
<keyword id="KW-0443">Lipid metabolism</keyword>
<keyword id="KW-0472">Membrane</keyword>
<keyword id="KW-0489">Methyltransferase</keyword>
<keyword id="KW-0594">Phospholipid biosynthesis</keyword>
<keyword id="KW-1208">Phospholipid metabolism</keyword>
<keyword id="KW-1185">Reference proteome</keyword>
<keyword id="KW-0949">S-adenosyl-L-methionine</keyword>
<keyword id="KW-0808">Transferase</keyword>
<keyword id="KW-0812">Transmembrane</keyword>
<keyword id="KW-1133">Transmembrane helix</keyword>
<protein>
    <recommendedName>
        <fullName evidence="1">Phosphatidylethanolamine N-methyltransferase</fullName>
        <shortName evidence="1">PE methyltransferase</shortName>
        <shortName evidence="1">PEAMT</shortName>
        <shortName evidence="1">PEMT</shortName>
        <ecNumber evidence="1">2.1.1.17</ecNumber>
    </recommendedName>
</protein>
<organism>
    <name type="scientific">Laccaria bicolor (strain S238N-H82 / ATCC MYA-4686)</name>
    <name type="common">Bicoloured deceiver</name>
    <name type="synonym">Laccaria laccata var. bicolor</name>
    <dbReference type="NCBI Taxonomy" id="486041"/>
    <lineage>
        <taxon>Eukaryota</taxon>
        <taxon>Fungi</taxon>
        <taxon>Dikarya</taxon>
        <taxon>Basidiomycota</taxon>
        <taxon>Agaricomycotina</taxon>
        <taxon>Agaricomycetes</taxon>
        <taxon>Agaricomycetidae</taxon>
        <taxon>Agaricales</taxon>
        <taxon>Agaricineae</taxon>
        <taxon>Hydnangiaceae</taxon>
        <taxon>Laccaria</taxon>
    </lineage>
</organism>
<comment type="function">
    <text evidence="1">Catalyzes the first step of the methylation pathway of phosphatidylcholine biosynthesis, the SAM-dependent methylation of phosphatidylethanolamine (PE) to phosphatidylmonomethylethanolamine (PMME).</text>
</comment>
<comment type="catalytic activity">
    <reaction evidence="1">
        <text>a 1,2-diacyl-sn-glycero-3-phosphoethanolamine + S-adenosyl-L-methionine = a 1,2-diacyl-sn-glycero-3-phospho-N-methylethanolamine + S-adenosyl-L-homocysteine + H(+)</text>
        <dbReference type="Rhea" id="RHEA:11164"/>
        <dbReference type="ChEBI" id="CHEBI:15378"/>
        <dbReference type="ChEBI" id="CHEBI:57856"/>
        <dbReference type="ChEBI" id="CHEBI:59789"/>
        <dbReference type="ChEBI" id="CHEBI:64573"/>
        <dbReference type="ChEBI" id="CHEBI:64612"/>
        <dbReference type="EC" id="2.1.1.17"/>
    </reaction>
</comment>
<comment type="pathway">
    <text evidence="1">Phospholipid metabolism; phosphatidylcholine biosynthesis.</text>
</comment>
<comment type="subcellular location">
    <subcellularLocation>
        <location evidence="1">Endoplasmic reticulum membrane</location>
        <topology evidence="1">Multi-pass membrane protein</topology>
    </subcellularLocation>
</comment>
<comment type="similarity">
    <text evidence="1">Belongs to the class VI-like SAM-binding methyltransferase superfamily. CHO2 family.</text>
</comment>
<name>CHO2_LACBS</name>